<accession>Q7N090</accession>
<protein>
    <recommendedName>
        <fullName evidence="1">UPF0102 protein plu4003</fullName>
    </recommendedName>
</protein>
<name>Y4003_PHOLL</name>
<reference key="1">
    <citation type="journal article" date="2003" name="Nat. Biotechnol.">
        <title>The genome sequence of the entomopathogenic bacterium Photorhabdus luminescens.</title>
        <authorList>
            <person name="Duchaud E."/>
            <person name="Rusniok C."/>
            <person name="Frangeul L."/>
            <person name="Buchrieser C."/>
            <person name="Givaudan A."/>
            <person name="Taourit S."/>
            <person name="Bocs S."/>
            <person name="Boursaux-Eude C."/>
            <person name="Chandler M."/>
            <person name="Charles J.-F."/>
            <person name="Dassa E."/>
            <person name="Derose R."/>
            <person name="Derzelle S."/>
            <person name="Freyssinet G."/>
            <person name="Gaudriault S."/>
            <person name="Medigue C."/>
            <person name="Lanois A."/>
            <person name="Powell K."/>
            <person name="Siguier P."/>
            <person name="Vincent R."/>
            <person name="Wingate V."/>
            <person name="Zouine M."/>
            <person name="Glaser P."/>
            <person name="Boemare N."/>
            <person name="Danchin A."/>
            <person name="Kunst F."/>
        </authorList>
    </citation>
    <scope>NUCLEOTIDE SEQUENCE [LARGE SCALE GENOMIC DNA]</scope>
    <source>
        <strain>DSM 15139 / CIP 105565 / TT01</strain>
    </source>
</reference>
<gene>
    <name type="ordered locus">plu4003</name>
</gene>
<sequence length="126" mass="14615">MKIKKLTSYLLGRNYEAQAKLFLQKQGLSFIAANVKVHGGEIDLIMKDKQTWVFIEVRFRKSGQYGDALATITRSKRKKLLHAAAVWLFQRGECFETSSCRFDICAITGQQFEWLQNAFNQNEFTR</sequence>
<comment type="similarity">
    <text evidence="1">Belongs to the UPF0102 family.</text>
</comment>
<keyword id="KW-1185">Reference proteome</keyword>
<evidence type="ECO:0000255" key="1">
    <source>
        <dbReference type="HAMAP-Rule" id="MF_00048"/>
    </source>
</evidence>
<dbReference type="EMBL" id="BX571872">
    <property type="protein sequence ID" value="CAE16375.1"/>
    <property type="molecule type" value="Genomic_DNA"/>
</dbReference>
<dbReference type="RefSeq" id="WP_011148135.1">
    <property type="nucleotide sequence ID" value="NC_005126.1"/>
</dbReference>
<dbReference type="SMR" id="Q7N090"/>
<dbReference type="STRING" id="243265.plu4003"/>
<dbReference type="GeneID" id="48850228"/>
<dbReference type="KEGG" id="plu:plu4003"/>
<dbReference type="eggNOG" id="COG0792">
    <property type="taxonomic scope" value="Bacteria"/>
</dbReference>
<dbReference type="HOGENOM" id="CLU_115353_1_0_6"/>
<dbReference type="OrthoDB" id="9794876at2"/>
<dbReference type="Proteomes" id="UP000002514">
    <property type="component" value="Chromosome"/>
</dbReference>
<dbReference type="GO" id="GO:0003676">
    <property type="term" value="F:nucleic acid binding"/>
    <property type="evidence" value="ECO:0007669"/>
    <property type="project" value="InterPro"/>
</dbReference>
<dbReference type="Gene3D" id="3.40.1350.10">
    <property type="match status" value="1"/>
</dbReference>
<dbReference type="HAMAP" id="MF_00048">
    <property type="entry name" value="UPF0102"/>
    <property type="match status" value="1"/>
</dbReference>
<dbReference type="InterPro" id="IPR011335">
    <property type="entry name" value="Restrct_endonuc-II-like"/>
</dbReference>
<dbReference type="InterPro" id="IPR011856">
    <property type="entry name" value="tRNA_endonuc-like_dom_sf"/>
</dbReference>
<dbReference type="InterPro" id="IPR003509">
    <property type="entry name" value="UPF0102_YraN-like"/>
</dbReference>
<dbReference type="NCBIfam" id="NF009150">
    <property type="entry name" value="PRK12497.1-3"/>
    <property type="match status" value="1"/>
</dbReference>
<dbReference type="NCBIfam" id="TIGR00252">
    <property type="entry name" value="YraN family protein"/>
    <property type="match status" value="1"/>
</dbReference>
<dbReference type="PANTHER" id="PTHR34039">
    <property type="entry name" value="UPF0102 PROTEIN YRAN"/>
    <property type="match status" value="1"/>
</dbReference>
<dbReference type="PANTHER" id="PTHR34039:SF1">
    <property type="entry name" value="UPF0102 PROTEIN YRAN"/>
    <property type="match status" value="1"/>
</dbReference>
<dbReference type="Pfam" id="PF02021">
    <property type="entry name" value="UPF0102"/>
    <property type="match status" value="1"/>
</dbReference>
<dbReference type="SUPFAM" id="SSF52980">
    <property type="entry name" value="Restriction endonuclease-like"/>
    <property type="match status" value="1"/>
</dbReference>
<organism>
    <name type="scientific">Photorhabdus laumondii subsp. laumondii (strain DSM 15139 / CIP 105565 / TT01)</name>
    <name type="common">Photorhabdus luminescens subsp. laumondii</name>
    <dbReference type="NCBI Taxonomy" id="243265"/>
    <lineage>
        <taxon>Bacteria</taxon>
        <taxon>Pseudomonadati</taxon>
        <taxon>Pseudomonadota</taxon>
        <taxon>Gammaproteobacteria</taxon>
        <taxon>Enterobacterales</taxon>
        <taxon>Morganellaceae</taxon>
        <taxon>Photorhabdus</taxon>
    </lineage>
</organism>
<feature type="chain" id="PRO_0000336222" description="UPF0102 protein plu4003">
    <location>
        <begin position="1"/>
        <end position="126"/>
    </location>
</feature>
<proteinExistence type="inferred from homology"/>